<sequence>MKKLFASLAIAAVVAPVWAATQTVTLSVPGMTCSACPITVKKAISKVEGVSKVNVTFETREAVVTFDDAKTSVQKLTKATEDAGYPSSVKK</sequence>
<organism>
    <name type="scientific">Serratia marcescens</name>
    <dbReference type="NCBI Taxonomy" id="615"/>
    <lineage>
        <taxon>Bacteria</taxon>
        <taxon>Pseudomonadati</taxon>
        <taxon>Pseudomonadota</taxon>
        <taxon>Gammaproteobacteria</taxon>
        <taxon>Enterobacterales</taxon>
        <taxon>Yersiniaceae</taxon>
        <taxon>Serratia</taxon>
    </lineage>
</organism>
<geneLocation type="plasmid">
    <name>pDU1358</name>
</geneLocation>
<proteinExistence type="evidence at protein level"/>
<accession>P13113</accession>
<feature type="signal peptide" evidence="2">
    <location>
        <begin position="1"/>
        <end position="19"/>
    </location>
</feature>
<feature type="chain" id="PRO_0000021677" description="Mercuric transport protein periplasmic component">
    <location>
        <begin position="20"/>
        <end position="91"/>
    </location>
</feature>
<feature type="domain" description="HMA" evidence="1">
    <location>
        <begin position="22"/>
        <end position="88"/>
    </location>
</feature>
<feature type="binding site" evidence="1">
    <location>
        <position position="33"/>
    </location>
    <ligand>
        <name>Hg(2+)</name>
        <dbReference type="ChEBI" id="CHEBI:16793"/>
    </ligand>
</feature>
<feature type="binding site" evidence="1">
    <location>
        <position position="36"/>
    </location>
    <ligand>
        <name>Hg(2+)</name>
        <dbReference type="ChEBI" id="CHEBI:16793"/>
    </ligand>
</feature>
<name>MERP_SERMA</name>
<keyword id="KW-0903">Direct protein sequencing</keyword>
<keyword id="KW-0475">Mercuric resistance</keyword>
<keyword id="KW-0476">Mercury</keyword>
<keyword id="KW-0479">Metal-binding</keyword>
<keyword id="KW-0574">Periplasm</keyword>
<keyword id="KW-0614">Plasmid</keyword>
<keyword id="KW-0732">Signal</keyword>
<comment type="function">
    <text evidence="5">Involved in mercury resistance. Acts as a mercury scavenger that specifically binds to a mercuric ion in the periplasm and probably passes it to the cytoplasmic mercuric reductase MerA via the mercuric transport protein MerT.</text>
</comment>
<comment type="subunit">
    <text evidence="2">Monomer.</text>
</comment>
<comment type="subcellular location">
    <subcellularLocation>
        <location evidence="5">Periplasm</location>
    </subcellularLocation>
</comment>
<comment type="similarity">
    <text evidence="4">Belongs to the MerP family.</text>
</comment>
<protein>
    <recommendedName>
        <fullName evidence="4">Mercuric transport protein periplasmic component</fullName>
    </recommendedName>
    <alternativeName>
        <fullName evidence="4">Mercury scavenger protein</fullName>
    </alternativeName>
    <alternativeName>
        <fullName evidence="4">Periplasmic mercury ion-binding protein</fullName>
    </alternativeName>
</protein>
<gene>
    <name evidence="3" type="primary">merP</name>
</gene>
<reference key="1">
    <citation type="journal article" date="1989" name="J. Bacteriol.">
        <title>Mercury operon regulation by the merR gene of the organomercurial resistance system of plasmid pDU1358.</title>
        <authorList>
            <person name="Nucifora G."/>
            <person name="Chu L."/>
            <person name="Silver S."/>
            <person name="Misra T.K."/>
        </authorList>
    </citation>
    <scope>NUCLEOTIDE SEQUENCE [GENOMIC DNA]</scope>
</reference>
<reference key="2">
    <citation type="journal article" date="1992" name="Eur. J. Biochem.">
        <title>Purification and properties of the mercuric-ion-binding protein MerP.</title>
        <authorList>
            <person name="Sahlman L."/>
            <person name="Jonsson B.H."/>
        </authorList>
    </citation>
    <scope>PROTEIN SEQUENCE OF 20-24</scope>
    <scope>FUNCTION</scope>
    <scope>SUBUNIT</scope>
    <scope>SUBCELLULAR LOCATION</scope>
    <scope>HG(2+)-BINDING</scope>
</reference>
<evidence type="ECO:0000255" key="1">
    <source>
        <dbReference type="PROSITE-ProRule" id="PRU00280"/>
    </source>
</evidence>
<evidence type="ECO:0000269" key="2">
    <source>
    </source>
</evidence>
<evidence type="ECO:0000303" key="3">
    <source>
    </source>
</evidence>
<evidence type="ECO:0000305" key="4"/>
<evidence type="ECO:0000305" key="5">
    <source>
    </source>
</evidence>
<dbReference type="EMBL" id="M24940">
    <property type="protein sequence ID" value="AAA98223.1"/>
    <property type="molecule type" value="Genomic_DNA"/>
</dbReference>
<dbReference type="PIR" id="C33858">
    <property type="entry name" value="C33858"/>
</dbReference>
<dbReference type="RefSeq" id="WP_000732290.1">
    <property type="nucleotide sequence ID" value="NZ_SWIB01000042.1"/>
</dbReference>
<dbReference type="SMR" id="P13113"/>
<dbReference type="GeneID" id="89684092"/>
<dbReference type="GO" id="GO:0042597">
    <property type="term" value="C:periplasmic space"/>
    <property type="evidence" value="ECO:0007669"/>
    <property type="project" value="UniProtKB-SubCell"/>
</dbReference>
<dbReference type="GO" id="GO:0045340">
    <property type="term" value="F:mercury ion binding"/>
    <property type="evidence" value="ECO:0007669"/>
    <property type="project" value="InterPro"/>
</dbReference>
<dbReference type="GO" id="GO:0015097">
    <property type="term" value="F:mercury ion transmembrane transporter activity"/>
    <property type="evidence" value="ECO:0007669"/>
    <property type="project" value="InterPro"/>
</dbReference>
<dbReference type="CDD" id="cd00371">
    <property type="entry name" value="HMA"/>
    <property type="match status" value="1"/>
</dbReference>
<dbReference type="FunFam" id="3.30.70.100:FF:000005">
    <property type="entry name" value="Copper-exporting P-type ATPase A"/>
    <property type="match status" value="1"/>
</dbReference>
<dbReference type="Gene3D" id="3.30.70.100">
    <property type="match status" value="1"/>
</dbReference>
<dbReference type="InterPro" id="IPR017969">
    <property type="entry name" value="Heavy-metal-associated_CS"/>
</dbReference>
<dbReference type="InterPro" id="IPR006121">
    <property type="entry name" value="HMA_dom"/>
</dbReference>
<dbReference type="InterPro" id="IPR036163">
    <property type="entry name" value="HMA_dom_sf"/>
</dbReference>
<dbReference type="InterPro" id="IPR011795">
    <property type="entry name" value="MerP"/>
</dbReference>
<dbReference type="InterPro" id="IPR001802">
    <property type="entry name" value="MerP/CopZ"/>
</dbReference>
<dbReference type="NCBIfam" id="TIGR02052">
    <property type="entry name" value="MerP"/>
    <property type="match status" value="1"/>
</dbReference>
<dbReference type="PANTHER" id="PTHR46594">
    <property type="entry name" value="P-TYPE CATION-TRANSPORTING ATPASE"/>
    <property type="match status" value="1"/>
</dbReference>
<dbReference type="PANTHER" id="PTHR46594:SF4">
    <property type="entry name" value="P-TYPE CATION-TRANSPORTING ATPASE"/>
    <property type="match status" value="1"/>
</dbReference>
<dbReference type="Pfam" id="PF00403">
    <property type="entry name" value="HMA"/>
    <property type="match status" value="1"/>
</dbReference>
<dbReference type="PRINTS" id="PR00946">
    <property type="entry name" value="HGSCAVENGER"/>
</dbReference>
<dbReference type="SUPFAM" id="SSF55008">
    <property type="entry name" value="HMA, heavy metal-associated domain"/>
    <property type="match status" value="1"/>
</dbReference>
<dbReference type="PROSITE" id="PS01047">
    <property type="entry name" value="HMA_1"/>
    <property type="match status" value="1"/>
</dbReference>
<dbReference type="PROSITE" id="PS50846">
    <property type="entry name" value="HMA_2"/>
    <property type="match status" value="1"/>
</dbReference>